<comment type="function">
    <text evidence="1">Redox regulated molecular chaperone. Protects both thermally unfolding and oxidatively damaged proteins from irreversible aggregation. Plays an important role in the bacterial defense system toward oxidative stress.</text>
</comment>
<comment type="subcellular location">
    <subcellularLocation>
        <location evidence="1">Cytoplasm</location>
    </subcellularLocation>
</comment>
<comment type="PTM">
    <text evidence="1">Under oxidizing conditions two disulfide bonds are formed involving the reactive cysteines. Under reducing conditions zinc is bound to the reactive cysteines and the protein is inactive.</text>
</comment>
<comment type="similarity">
    <text evidence="1">Belongs to the HSP33 family.</text>
</comment>
<feature type="chain" id="PRO_1000015536" description="33 kDa chaperonin">
    <location>
        <begin position="1"/>
        <end position="291"/>
    </location>
</feature>
<feature type="disulfide bond" description="Redox-active" evidence="1">
    <location>
        <begin position="237"/>
        <end position="239"/>
    </location>
</feature>
<feature type="disulfide bond" description="Redox-active" evidence="1">
    <location>
        <begin position="270"/>
        <end position="273"/>
    </location>
</feature>
<keyword id="KW-0143">Chaperone</keyword>
<keyword id="KW-0963">Cytoplasm</keyword>
<keyword id="KW-1015">Disulfide bond</keyword>
<keyword id="KW-0676">Redox-active center</keyword>
<keyword id="KW-1185">Reference proteome</keyword>
<keyword id="KW-0862">Zinc</keyword>
<dbReference type="EMBL" id="AM180355">
    <property type="protein sequence ID" value="CAJ70116.1"/>
    <property type="molecule type" value="Genomic_DNA"/>
</dbReference>
<dbReference type="RefSeq" id="WP_003428049.1">
    <property type="nucleotide sequence ID" value="NZ_JAUPES010000002.1"/>
</dbReference>
<dbReference type="RefSeq" id="YP_001089735.1">
    <property type="nucleotide sequence ID" value="NC_009089.1"/>
</dbReference>
<dbReference type="SMR" id="Q17ZW5"/>
<dbReference type="STRING" id="272563.CD630_32190"/>
<dbReference type="EnsemblBacteria" id="CAJ70116">
    <property type="protein sequence ID" value="CAJ70116"/>
    <property type="gene ID" value="CD630_32190"/>
</dbReference>
<dbReference type="GeneID" id="66355637"/>
<dbReference type="KEGG" id="cdf:CD630_32190"/>
<dbReference type="KEGG" id="pdc:CDIF630_03513"/>
<dbReference type="PATRIC" id="fig|272563.120.peg.3399"/>
<dbReference type="eggNOG" id="COG1281">
    <property type="taxonomic scope" value="Bacteria"/>
</dbReference>
<dbReference type="OrthoDB" id="9776534at2"/>
<dbReference type="PhylomeDB" id="Q17ZW5"/>
<dbReference type="BioCyc" id="PDIF272563:G12WB-3385-MONOMER"/>
<dbReference type="Proteomes" id="UP000001978">
    <property type="component" value="Chromosome"/>
</dbReference>
<dbReference type="GO" id="GO:0005737">
    <property type="term" value="C:cytoplasm"/>
    <property type="evidence" value="ECO:0007669"/>
    <property type="project" value="UniProtKB-SubCell"/>
</dbReference>
<dbReference type="GO" id="GO:0044183">
    <property type="term" value="F:protein folding chaperone"/>
    <property type="evidence" value="ECO:0007669"/>
    <property type="project" value="TreeGrafter"/>
</dbReference>
<dbReference type="GO" id="GO:0051082">
    <property type="term" value="F:unfolded protein binding"/>
    <property type="evidence" value="ECO:0007669"/>
    <property type="project" value="UniProtKB-UniRule"/>
</dbReference>
<dbReference type="GO" id="GO:0042026">
    <property type="term" value="P:protein refolding"/>
    <property type="evidence" value="ECO:0007669"/>
    <property type="project" value="TreeGrafter"/>
</dbReference>
<dbReference type="CDD" id="cd00498">
    <property type="entry name" value="Hsp33"/>
    <property type="match status" value="1"/>
</dbReference>
<dbReference type="Gene3D" id="3.55.30.10">
    <property type="entry name" value="Hsp33 domain"/>
    <property type="match status" value="1"/>
</dbReference>
<dbReference type="Gene3D" id="3.90.1280.10">
    <property type="entry name" value="HSP33 redox switch-like"/>
    <property type="match status" value="1"/>
</dbReference>
<dbReference type="HAMAP" id="MF_00117">
    <property type="entry name" value="HslO"/>
    <property type="match status" value="1"/>
</dbReference>
<dbReference type="InterPro" id="IPR000397">
    <property type="entry name" value="Heat_shock_Hsp33"/>
</dbReference>
<dbReference type="InterPro" id="IPR016154">
    <property type="entry name" value="Heat_shock_Hsp33_C"/>
</dbReference>
<dbReference type="InterPro" id="IPR016153">
    <property type="entry name" value="Heat_shock_Hsp33_N"/>
</dbReference>
<dbReference type="NCBIfam" id="NF001033">
    <property type="entry name" value="PRK00114.1"/>
    <property type="match status" value="1"/>
</dbReference>
<dbReference type="PANTHER" id="PTHR30111">
    <property type="entry name" value="33 KDA CHAPERONIN"/>
    <property type="match status" value="1"/>
</dbReference>
<dbReference type="PANTHER" id="PTHR30111:SF1">
    <property type="entry name" value="33 KDA CHAPERONIN"/>
    <property type="match status" value="1"/>
</dbReference>
<dbReference type="Pfam" id="PF01430">
    <property type="entry name" value="HSP33"/>
    <property type="match status" value="1"/>
</dbReference>
<dbReference type="PIRSF" id="PIRSF005261">
    <property type="entry name" value="Heat_shock_Hsp33"/>
    <property type="match status" value="1"/>
</dbReference>
<dbReference type="SUPFAM" id="SSF64397">
    <property type="entry name" value="Hsp33 domain"/>
    <property type="match status" value="1"/>
</dbReference>
<dbReference type="SUPFAM" id="SSF118352">
    <property type="entry name" value="HSP33 redox switch-like"/>
    <property type="match status" value="1"/>
</dbReference>
<evidence type="ECO:0000255" key="1">
    <source>
        <dbReference type="HAMAP-Rule" id="MF_00117"/>
    </source>
</evidence>
<accession>Q17ZW5</accession>
<organism>
    <name type="scientific">Clostridioides difficile (strain 630)</name>
    <name type="common">Peptoclostridium difficile</name>
    <dbReference type="NCBI Taxonomy" id="272563"/>
    <lineage>
        <taxon>Bacteria</taxon>
        <taxon>Bacillati</taxon>
        <taxon>Bacillota</taxon>
        <taxon>Clostridia</taxon>
        <taxon>Peptostreptococcales</taxon>
        <taxon>Peptostreptococcaceae</taxon>
        <taxon>Clostridioides</taxon>
    </lineage>
</organism>
<name>HSLO_CLOD6</name>
<reference key="1">
    <citation type="journal article" date="2006" name="Nat. Genet.">
        <title>The multidrug-resistant human pathogen Clostridium difficile has a highly mobile, mosaic genome.</title>
        <authorList>
            <person name="Sebaihia M."/>
            <person name="Wren B.W."/>
            <person name="Mullany P."/>
            <person name="Fairweather N.F."/>
            <person name="Minton N."/>
            <person name="Stabler R."/>
            <person name="Thomson N.R."/>
            <person name="Roberts A.P."/>
            <person name="Cerdeno-Tarraga A.M."/>
            <person name="Wang H."/>
            <person name="Holden M.T.G."/>
            <person name="Wright A."/>
            <person name="Churcher C."/>
            <person name="Quail M.A."/>
            <person name="Baker S."/>
            <person name="Bason N."/>
            <person name="Brooks K."/>
            <person name="Chillingworth T."/>
            <person name="Cronin A."/>
            <person name="Davis P."/>
            <person name="Dowd L."/>
            <person name="Fraser A."/>
            <person name="Feltwell T."/>
            <person name="Hance Z."/>
            <person name="Holroyd S."/>
            <person name="Jagels K."/>
            <person name="Moule S."/>
            <person name="Mungall K."/>
            <person name="Price C."/>
            <person name="Rabbinowitsch E."/>
            <person name="Sharp S."/>
            <person name="Simmonds M."/>
            <person name="Stevens K."/>
            <person name="Unwin L."/>
            <person name="Whithead S."/>
            <person name="Dupuy B."/>
            <person name="Dougan G."/>
            <person name="Barrell B."/>
            <person name="Parkhill J."/>
        </authorList>
    </citation>
    <scope>NUCLEOTIDE SEQUENCE [LARGE SCALE GENOMIC DNA]</scope>
    <source>
        <strain>630</strain>
    </source>
</reference>
<gene>
    <name evidence="1" type="primary">hslO</name>
    <name type="ordered locus">CD630_32190</name>
</gene>
<proteinExistence type="inferred from homology"/>
<sequence>MRDYVLRATSGNGQVRAFVATTRNTVEEARRLHETTKVATAALGRTLTATSIMGLMMKNDSDKLTVIIKGGGPIGTIIATSDSKGMVKGYVGNPQVEVEDYPNGKLNVAAAVGTEGVVKVIKDLGLREPYNGTYPLVSGEIAEDFTYYFAVSEQTPSVVALGVLTKEDEVEFAGGFIVQLMPDAEEETIAKLEENVAKLPSITNMLKEGKSPEDILNIVLDGLEPKILDTCEVGFMCECSKERVKTALVAIGKKSLAQIIEEDKKAEVGCQFCNKKYMYSEEELLEILKEM</sequence>
<protein>
    <recommendedName>
        <fullName evidence="1">33 kDa chaperonin</fullName>
    </recommendedName>
    <alternativeName>
        <fullName evidence="1">Heat shock protein 33 homolog</fullName>
        <shortName evidence="1">HSP33</shortName>
    </alternativeName>
</protein>